<reference key="1">
    <citation type="journal article" date="2007" name="Nat. Biotechnol.">
        <title>Comparative analysis of the complete genome sequence of the plant growth-promoting bacterium Bacillus amyloliquefaciens FZB42.</title>
        <authorList>
            <person name="Chen X.H."/>
            <person name="Koumoutsi A."/>
            <person name="Scholz R."/>
            <person name="Eisenreich A."/>
            <person name="Schneider K."/>
            <person name="Heinemeyer I."/>
            <person name="Morgenstern B."/>
            <person name="Voss B."/>
            <person name="Hess W.R."/>
            <person name="Reva O."/>
            <person name="Junge H."/>
            <person name="Voigt B."/>
            <person name="Jungblut P.R."/>
            <person name="Vater J."/>
            <person name="Suessmuth R."/>
            <person name="Liesegang H."/>
            <person name="Strittmatter A."/>
            <person name="Gottschalk G."/>
            <person name="Borriss R."/>
        </authorList>
    </citation>
    <scope>NUCLEOTIDE SEQUENCE [LARGE SCALE GENOMIC DNA]</scope>
    <source>
        <strain>DSM 23117 / BGSC 10A6 / LMG 26770 / FZB42</strain>
    </source>
</reference>
<keyword id="KW-0028">Amino-acid biosynthesis</keyword>
<keyword id="KW-0055">Arginine biosynthesis</keyword>
<keyword id="KW-0963">Cytoplasm</keyword>
<keyword id="KW-0238">DNA-binding</keyword>
<keyword id="KW-0678">Repressor</keyword>
<keyword id="KW-0804">Transcription</keyword>
<keyword id="KW-0805">Transcription regulation</keyword>
<dbReference type="EMBL" id="CP000560">
    <property type="protein sequence ID" value="ABS74619.1"/>
    <property type="molecule type" value="Genomic_DNA"/>
</dbReference>
<dbReference type="RefSeq" id="WP_003153173.1">
    <property type="nucleotide sequence ID" value="NC_009725.2"/>
</dbReference>
<dbReference type="SMR" id="A7Z6J3"/>
<dbReference type="GeneID" id="93081396"/>
<dbReference type="KEGG" id="bay:RBAM_022580"/>
<dbReference type="HOGENOM" id="CLU_097103_3_0_9"/>
<dbReference type="UniPathway" id="UPA00068"/>
<dbReference type="Proteomes" id="UP000001120">
    <property type="component" value="Chromosome"/>
</dbReference>
<dbReference type="GO" id="GO:0005737">
    <property type="term" value="C:cytoplasm"/>
    <property type="evidence" value="ECO:0007669"/>
    <property type="project" value="UniProtKB-SubCell"/>
</dbReference>
<dbReference type="GO" id="GO:0034618">
    <property type="term" value="F:arginine binding"/>
    <property type="evidence" value="ECO:0007669"/>
    <property type="project" value="InterPro"/>
</dbReference>
<dbReference type="GO" id="GO:0003677">
    <property type="term" value="F:DNA binding"/>
    <property type="evidence" value="ECO:0007669"/>
    <property type="project" value="UniProtKB-KW"/>
</dbReference>
<dbReference type="GO" id="GO:0003700">
    <property type="term" value="F:DNA-binding transcription factor activity"/>
    <property type="evidence" value="ECO:0007669"/>
    <property type="project" value="UniProtKB-UniRule"/>
</dbReference>
<dbReference type="GO" id="GO:0006526">
    <property type="term" value="P:L-arginine biosynthetic process"/>
    <property type="evidence" value="ECO:0007669"/>
    <property type="project" value="UniProtKB-UniPathway"/>
</dbReference>
<dbReference type="GO" id="GO:0051259">
    <property type="term" value="P:protein complex oligomerization"/>
    <property type="evidence" value="ECO:0007669"/>
    <property type="project" value="InterPro"/>
</dbReference>
<dbReference type="GO" id="GO:1900079">
    <property type="term" value="P:regulation of arginine biosynthetic process"/>
    <property type="evidence" value="ECO:0007669"/>
    <property type="project" value="UniProtKB-UniRule"/>
</dbReference>
<dbReference type="FunFam" id="3.30.1360.40:FF:000006">
    <property type="entry name" value="Arginine repressor"/>
    <property type="match status" value="1"/>
</dbReference>
<dbReference type="Gene3D" id="3.30.1360.40">
    <property type="match status" value="1"/>
</dbReference>
<dbReference type="Gene3D" id="1.10.10.10">
    <property type="entry name" value="Winged helix-like DNA-binding domain superfamily/Winged helix DNA-binding domain"/>
    <property type="match status" value="1"/>
</dbReference>
<dbReference type="HAMAP" id="MF_00173">
    <property type="entry name" value="Arg_repressor"/>
    <property type="match status" value="1"/>
</dbReference>
<dbReference type="InterPro" id="IPR001669">
    <property type="entry name" value="Arg_repress"/>
</dbReference>
<dbReference type="InterPro" id="IPR020899">
    <property type="entry name" value="Arg_repress_C"/>
</dbReference>
<dbReference type="InterPro" id="IPR036251">
    <property type="entry name" value="Arg_repress_C_sf"/>
</dbReference>
<dbReference type="InterPro" id="IPR020900">
    <property type="entry name" value="Arg_repress_DNA-bd"/>
</dbReference>
<dbReference type="InterPro" id="IPR036388">
    <property type="entry name" value="WH-like_DNA-bd_sf"/>
</dbReference>
<dbReference type="InterPro" id="IPR036390">
    <property type="entry name" value="WH_DNA-bd_sf"/>
</dbReference>
<dbReference type="NCBIfam" id="TIGR01529">
    <property type="entry name" value="argR_whole"/>
    <property type="match status" value="1"/>
</dbReference>
<dbReference type="NCBIfam" id="NF003281">
    <property type="entry name" value="PRK04280.1"/>
    <property type="match status" value="1"/>
</dbReference>
<dbReference type="PANTHER" id="PTHR34471">
    <property type="entry name" value="ARGININE REPRESSOR"/>
    <property type="match status" value="1"/>
</dbReference>
<dbReference type="PANTHER" id="PTHR34471:SF1">
    <property type="entry name" value="ARGININE REPRESSOR"/>
    <property type="match status" value="1"/>
</dbReference>
<dbReference type="Pfam" id="PF01316">
    <property type="entry name" value="Arg_repressor"/>
    <property type="match status" value="1"/>
</dbReference>
<dbReference type="Pfam" id="PF02863">
    <property type="entry name" value="Arg_repressor_C"/>
    <property type="match status" value="1"/>
</dbReference>
<dbReference type="PRINTS" id="PR01467">
    <property type="entry name" value="ARGREPRESSOR"/>
</dbReference>
<dbReference type="SUPFAM" id="SSF55252">
    <property type="entry name" value="C-terminal domain of arginine repressor"/>
    <property type="match status" value="1"/>
</dbReference>
<dbReference type="SUPFAM" id="SSF46785">
    <property type="entry name" value="Winged helix' DNA-binding domain"/>
    <property type="match status" value="1"/>
</dbReference>
<accession>A7Z6J3</accession>
<comment type="function">
    <text evidence="1">Regulates arginine biosynthesis genes.</text>
</comment>
<comment type="pathway">
    <text>Amino-acid biosynthesis; L-arginine biosynthesis [regulation].</text>
</comment>
<comment type="subcellular location">
    <subcellularLocation>
        <location evidence="1">Cytoplasm</location>
    </subcellularLocation>
</comment>
<comment type="similarity">
    <text evidence="1">Belongs to the ArgR family.</text>
</comment>
<protein>
    <recommendedName>
        <fullName evidence="1">Arginine repressor</fullName>
    </recommendedName>
</protein>
<evidence type="ECO:0000255" key="1">
    <source>
        <dbReference type="HAMAP-Rule" id="MF_00173"/>
    </source>
</evidence>
<feature type="chain" id="PRO_1000023545" description="Arginine repressor">
    <location>
        <begin position="1"/>
        <end position="149"/>
    </location>
</feature>
<proteinExistence type="inferred from homology"/>
<gene>
    <name evidence="1" type="primary">argR</name>
    <name type="ordered locus">RBAM_022580</name>
</gene>
<name>ARGR_BACVZ</name>
<sequence length="149" mass="16870">MTKGQRHIKIRELITSHEIETQDDLVDMLREEGYKVTQATVSRDIKELHLVKVPTNNGSYKYSLPADQRFNPLSKLKRSLMDAFVKIDSASHMIVLKTMPGNAQAIGALMDNLEWEEIMGTICGDDTILIICRTPEDTEGVQSRLLELL</sequence>
<organism>
    <name type="scientific">Bacillus velezensis (strain DSM 23117 / BGSC 10A6 / LMG 26770 / FZB42)</name>
    <name type="common">Bacillus amyloliquefaciens subsp. plantarum</name>
    <dbReference type="NCBI Taxonomy" id="326423"/>
    <lineage>
        <taxon>Bacteria</taxon>
        <taxon>Bacillati</taxon>
        <taxon>Bacillota</taxon>
        <taxon>Bacilli</taxon>
        <taxon>Bacillales</taxon>
        <taxon>Bacillaceae</taxon>
        <taxon>Bacillus</taxon>
        <taxon>Bacillus amyloliquefaciens group</taxon>
    </lineage>
</organism>